<accession>Q1D6I2</accession>
<evidence type="ECO:0000255" key="1">
    <source>
        <dbReference type="HAMAP-Rule" id="MF_00605"/>
    </source>
</evidence>
<sequence length="247" mass="26869">MSPPYPVEILTLFPGMVTGYLGASILGKAQEKGLLATTITDIREYAEGKHRVTDDAPYGGGAGMVMKPEPLVAAIEAAKARHPGARVLLMSPRGPTFTQATARELVRHEAGLILVCGRYEGVDERVMAHLDGELSLGDFVLTGGELAAMTVVDAVARLVPGVLGNVDSSVTESFEEGLLEHPQYTRPPVFRGVEVPAALQSGDHARIARWRRWKSLVLTHERRPDLYARVVLSKADQKLLARREEEL</sequence>
<gene>
    <name evidence="1" type="primary">trmD</name>
    <name type="ordered locus">MXAN_3548</name>
</gene>
<dbReference type="EC" id="2.1.1.228" evidence="1"/>
<dbReference type="EMBL" id="CP000113">
    <property type="protein sequence ID" value="ABF92908.1"/>
    <property type="molecule type" value="Genomic_DNA"/>
</dbReference>
<dbReference type="RefSeq" id="WP_011553577.1">
    <property type="nucleotide sequence ID" value="NC_008095.1"/>
</dbReference>
<dbReference type="SMR" id="Q1D6I2"/>
<dbReference type="STRING" id="246197.MXAN_3548"/>
<dbReference type="EnsemblBacteria" id="ABF92908">
    <property type="protein sequence ID" value="ABF92908"/>
    <property type="gene ID" value="MXAN_3548"/>
</dbReference>
<dbReference type="GeneID" id="41360893"/>
<dbReference type="KEGG" id="mxa:MXAN_3548"/>
<dbReference type="eggNOG" id="COG0336">
    <property type="taxonomic scope" value="Bacteria"/>
</dbReference>
<dbReference type="HOGENOM" id="CLU_047363_0_1_7"/>
<dbReference type="OrthoDB" id="9807416at2"/>
<dbReference type="Proteomes" id="UP000002402">
    <property type="component" value="Chromosome"/>
</dbReference>
<dbReference type="GO" id="GO:0005829">
    <property type="term" value="C:cytosol"/>
    <property type="evidence" value="ECO:0007669"/>
    <property type="project" value="TreeGrafter"/>
</dbReference>
<dbReference type="GO" id="GO:0052906">
    <property type="term" value="F:tRNA (guanine(37)-N1)-methyltransferase activity"/>
    <property type="evidence" value="ECO:0007669"/>
    <property type="project" value="UniProtKB-UniRule"/>
</dbReference>
<dbReference type="GO" id="GO:0002939">
    <property type="term" value="P:tRNA N1-guanine methylation"/>
    <property type="evidence" value="ECO:0007669"/>
    <property type="project" value="TreeGrafter"/>
</dbReference>
<dbReference type="CDD" id="cd18080">
    <property type="entry name" value="TrmD-like"/>
    <property type="match status" value="1"/>
</dbReference>
<dbReference type="FunFam" id="1.10.1270.20:FF:000001">
    <property type="entry name" value="tRNA (guanine-N(1)-)-methyltransferase"/>
    <property type="match status" value="1"/>
</dbReference>
<dbReference type="FunFam" id="3.40.1280.10:FF:000001">
    <property type="entry name" value="tRNA (guanine-N(1)-)-methyltransferase"/>
    <property type="match status" value="1"/>
</dbReference>
<dbReference type="Gene3D" id="3.40.1280.10">
    <property type="match status" value="1"/>
</dbReference>
<dbReference type="Gene3D" id="1.10.1270.20">
    <property type="entry name" value="tRNA(m1g37)methyltransferase, domain 2"/>
    <property type="match status" value="1"/>
</dbReference>
<dbReference type="HAMAP" id="MF_00605">
    <property type="entry name" value="TrmD"/>
    <property type="match status" value="1"/>
</dbReference>
<dbReference type="InterPro" id="IPR029028">
    <property type="entry name" value="Alpha/beta_knot_MTases"/>
</dbReference>
<dbReference type="InterPro" id="IPR023148">
    <property type="entry name" value="tRNA_m1G_MeTrfase_C_sf"/>
</dbReference>
<dbReference type="InterPro" id="IPR002649">
    <property type="entry name" value="tRNA_m1G_MeTrfase_TrmD"/>
</dbReference>
<dbReference type="InterPro" id="IPR029026">
    <property type="entry name" value="tRNA_m1G_MTases_N"/>
</dbReference>
<dbReference type="InterPro" id="IPR016009">
    <property type="entry name" value="tRNA_MeTrfase_TRMD/TRM10"/>
</dbReference>
<dbReference type="NCBIfam" id="NF000648">
    <property type="entry name" value="PRK00026.1"/>
    <property type="match status" value="1"/>
</dbReference>
<dbReference type="NCBIfam" id="TIGR00088">
    <property type="entry name" value="trmD"/>
    <property type="match status" value="1"/>
</dbReference>
<dbReference type="PANTHER" id="PTHR46417">
    <property type="entry name" value="TRNA (GUANINE-N(1)-)-METHYLTRANSFERASE"/>
    <property type="match status" value="1"/>
</dbReference>
<dbReference type="PANTHER" id="PTHR46417:SF1">
    <property type="entry name" value="TRNA (GUANINE-N(1)-)-METHYLTRANSFERASE"/>
    <property type="match status" value="1"/>
</dbReference>
<dbReference type="Pfam" id="PF01746">
    <property type="entry name" value="tRNA_m1G_MT"/>
    <property type="match status" value="1"/>
</dbReference>
<dbReference type="PIRSF" id="PIRSF000386">
    <property type="entry name" value="tRNA_mtase"/>
    <property type="match status" value="1"/>
</dbReference>
<dbReference type="SUPFAM" id="SSF75217">
    <property type="entry name" value="alpha/beta knot"/>
    <property type="match status" value="1"/>
</dbReference>
<comment type="function">
    <text evidence="1">Specifically methylates guanosine-37 in various tRNAs.</text>
</comment>
<comment type="catalytic activity">
    <reaction evidence="1">
        <text>guanosine(37) in tRNA + S-adenosyl-L-methionine = N(1)-methylguanosine(37) in tRNA + S-adenosyl-L-homocysteine + H(+)</text>
        <dbReference type="Rhea" id="RHEA:36899"/>
        <dbReference type="Rhea" id="RHEA-COMP:10145"/>
        <dbReference type="Rhea" id="RHEA-COMP:10147"/>
        <dbReference type="ChEBI" id="CHEBI:15378"/>
        <dbReference type="ChEBI" id="CHEBI:57856"/>
        <dbReference type="ChEBI" id="CHEBI:59789"/>
        <dbReference type="ChEBI" id="CHEBI:73542"/>
        <dbReference type="ChEBI" id="CHEBI:74269"/>
        <dbReference type="EC" id="2.1.1.228"/>
    </reaction>
</comment>
<comment type="subunit">
    <text evidence="1">Homodimer.</text>
</comment>
<comment type="subcellular location">
    <subcellularLocation>
        <location evidence="1">Cytoplasm</location>
    </subcellularLocation>
</comment>
<comment type="similarity">
    <text evidence="1">Belongs to the RNA methyltransferase TrmD family.</text>
</comment>
<protein>
    <recommendedName>
        <fullName evidence="1">tRNA (guanine-N(1)-)-methyltransferase</fullName>
        <ecNumber evidence="1">2.1.1.228</ecNumber>
    </recommendedName>
    <alternativeName>
        <fullName evidence="1">M1G-methyltransferase</fullName>
    </alternativeName>
    <alternativeName>
        <fullName evidence="1">tRNA [GM37] methyltransferase</fullName>
    </alternativeName>
</protein>
<proteinExistence type="inferred from homology"/>
<reference key="1">
    <citation type="journal article" date="2006" name="Proc. Natl. Acad. Sci. U.S.A.">
        <title>Evolution of sensory complexity recorded in a myxobacterial genome.</title>
        <authorList>
            <person name="Goldman B.S."/>
            <person name="Nierman W.C."/>
            <person name="Kaiser D."/>
            <person name="Slater S.C."/>
            <person name="Durkin A.S."/>
            <person name="Eisen J.A."/>
            <person name="Ronning C.M."/>
            <person name="Barbazuk W.B."/>
            <person name="Blanchard M."/>
            <person name="Field C."/>
            <person name="Halling C."/>
            <person name="Hinkle G."/>
            <person name="Iartchuk O."/>
            <person name="Kim H.S."/>
            <person name="Mackenzie C."/>
            <person name="Madupu R."/>
            <person name="Miller N."/>
            <person name="Shvartsbeyn A."/>
            <person name="Sullivan S.A."/>
            <person name="Vaudin M."/>
            <person name="Wiegand R."/>
            <person name="Kaplan H.B."/>
        </authorList>
    </citation>
    <scope>NUCLEOTIDE SEQUENCE [LARGE SCALE GENOMIC DNA]</scope>
    <source>
        <strain>DK1622</strain>
    </source>
</reference>
<name>TRMD_MYXXD</name>
<feature type="chain" id="PRO_0000257437" description="tRNA (guanine-N(1)-)-methyltransferase">
    <location>
        <begin position="1"/>
        <end position="247"/>
    </location>
</feature>
<feature type="binding site" evidence="1">
    <location>
        <position position="117"/>
    </location>
    <ligand>
        <name>S-adenosyl-L-methionine</name>
        <dbReference type="ChEBI" id="CHEBI:59789"/>
    </ligand>
</feature>
<feature type="binding site" evidence="1">
    <location>
        <begin position="136"/>
        <end position="141"/>
    </location>
    <ligand>
        <name>S-adenosyl-L-methionine</name>
        <dbReference type="ChEBI" id="CHEBI:59789"/>
    </ligand>
</feature>
<keyword id="KW-0963">Cytoplasm</keyword>
<keyword id="KW-0489">Methyltransferase</keyword>
<keyword id="KW-1185">Reference proteome</keyword>
<keyword id="KW-0949">S-adenosyl-L-methionine</keyword>
<keyword id="KW-0808">Transferase</keyword>
<keyword id="KW-0819">tRNA processing</keyword>
<organism>
    <name type="scientific">Myxococcus xanthus (strain DK1622)</name>
    <dbReference type="NCBI Taxonomy" id="246197"/>
    <lineage>
        <taxon>Bacteria</taxon>
        <taxon>Pseudomonadati</taxon>
        <taxon>Myxococcota</taxon>
        <taxon>Myxococcia</taxon>
        <taxon>Myxococcales</taxon>
        <taxon>Cystobacterineae</taxon>
        <taxon>Myxococcaceae</taxon>
        <taxon>Myxococcus</taxon>
    </lineage>
</organism>